<evidence type="ECO:0000255" key="1">
    <source>
        <dbReference type="HAMAP-Rule" id="MF_00693"/>
    </source>
</evidence>
<name>Y1155_BIFLS</name>
<gene>
    <name type="ordered locus">Blon_1155</name>
    <name type="ordered locus">BLIJ_1182</name>
</gene>
<feature type="chain" id="PRO_1000200079" description="Probable transcriptional regulatory protein Blon_1155/BLIJ_1182">
    <location>
        <begin position="1"/>
        <end position="251"/>
    </location>
</feature>
<keyword id="KW-0963">Cytoplasm</keyword>
<keyword id="KW-0238">DNA-binding</keyword>
<keyword id="KW-0804">Transcription</keyword>
<keyword id="KW-0805">Transcription regulation</keyword>
<comment type="subcellular location">
    <subcellularLocation>
        <location evidence="1">Cytoplasm</location>
    </subcellularLocation>
</comment>
<comment type="similarity">
    <text evidence="1">Belongs to the TACO1 family.</text>
</comment>
<sequence>MSGHSKWATTKHKKAAIDAKRGKLFAKLIKNIEIAARLGGGDPDGNPSLYDAIYKAKKASMPADNIARAVKRGAGDEDGAANYEDIVYEGYAPAGVGLIIECLTDNRNRAAAEVRSTLTKGNGSLATSGSVSFNFERKGQIVVPSEGVDFDKLFETAAEAGAEDVTDDDEVYTVITGPSDLFTVRKALQDAGFDYDSADQVMQPKNEVELSLEDARKVSKLIDNLDDLDDVQNIYSNWTASDEVMAQLDEE</sequence>
<protein>
    <recommendedName>
        <fullName evidence="1">Probable transcriptional regulatory protein Blon_1155/BLIJ_1182</fullName>
    </recommendedName>
</protein>
<dbReference type="EMBL" id="CP001095">
    <property type="protein sequence ID" value="ACJ52245.1"/>
    <property type="molecule type" value="Genomic_DNA"/>
</dbReference>
<dbReference type="EMBL" id="AP010889">
    <property type="protein sequence ID" value="BAJ68770.1"/>
    <property type="molecule type" value="Genomic_DNA"/>
</dbReference>
<dbReference type="RefSeq" id="WP_003829358.1">
    <property type="nucleotide sequence ID" value="NZ_JDTT01000068.1"/>
</dbReference>
<dbReference type="SMR" id="B7GR15"/>
<dbReference type="KEGG" id="bln:Blon_1155"/>
<dbReference type="KEGG" id="blon:BLIJ_1182"/>
<dbReference type="PATRIC" id="fig|391904.8.peg.1179"/>
<dbReference type="HOGENOM" id="CLU_062974_2_2_11"/>
<dbReference type="Proteomes" id="UP000001360">
    <property type="component" value="Chromosome"/>
</dbReference>
<dbReference type="GO" id="GO:0005829">
    <property type="term" value="C:cytosol"/>
    <property type="evidence" value="ECO:0007669"/>
    <property type="project" value="TreeGrafter"/>
</dbReference>
<dbReference type="GO" id="GO:0003677">
    <property type="term" value="F:DNA binding"/>
    <property type="evidence" value="ECO:0007669"/>
    <property type="project" value="UniProtKB-UniRule"/>
</dbReference>
<dbReference type="GO" id="GO:0006355">
    <property type="term" value="P:regulation of DNA-templated transcription"/>
    <property type="evidence" value="ECO:0007669"/>
    <property type="project" value="UniProtKB-UniRule"/>
</dbReference>
<dbReference type="FunFam" id="1.10.10.200:FF:000002">
    <property type="entry name" value="Probable transcriptional regulatory protein CLM62_37755"/>
    <property type="match status" value="1"/>
</dbReference>
<dbReference type="FunFam" id="3.30.70.980:FF:000002">
    <property type="entry name" value="Probable transcriptional regulatory protein YebC"/>
    <property type="match status" value="1"/>
</dbReference>
<dbReference type="Gene3D" id="1.10.10.200">
    <property type="match status" value="1"/>
</dbReference>
<dbReference type="Gene3D" id="3.30.70.980">
    <property type="match status" value="2"/>
</dbReference>
<dbReference type="HAMAP" id="MF_00693">
    <property type="entry name" value="Transcrip_reg_TACO1"/>
    <property type="match status" value="1"/>
</dbReference>
<dbReference type="InterPro" id="IPR017856">
    <property type="entry name" value="Integrase-like_N"/>
</dbReference>
<dbReference type="InterPro" id="IPR048300">
    <property type="entry name" value="TACO1_YebC-like_2nd/3rd_dom"/>
</dbReference>
<dbReference type="InterPro" id="IPR049083">
    <property type="entry name" value="TACO1_YebC_N"/>
</dbReference>
<dbReference type="InterPro" id="IPR002876">
    <property type="entry name" value="Transcrip_reg_TACO1-like"/>
</dbReference>
<dbReference type="InterPro" id="IPR026564">
    <property type="entry name" value="Transcrip_reg_TACO1-like_dom3"/>
</dbReference>
<dbReference type="InterPro" id="IPR029072">
    <property type="entry name" value="YebC-like"/>
</dbReference>
<dbReference type="NCBIfam" id="NF001030">
    <property type="entry name" value="PRK00110.1"/>
    <property type="match status" value="1"/>
</dbReference>
<dbReference type="NCBIfam" id="NF009044">
    <property type="entry name" value="PRK12378.1"/>
    <property type="match status" value="1"/>
</dbReference>
<dbReference type="NCBIfam" id="TIGR01033">
    <property type="entry name" value="YebC/PmpR family DNA-binding transcriptional regulator"/>
    <property type="match status" value="1"/>
</dbReference>
<dbReference type="PANTHER" id="PTHR12532:SF6">
    <property type="entry name" value="TRANSCRIPTIONAL REGULATORY PROTEIN YEBC-RELATED"/>
    <property type="match status" value="1"/>
</dbReference>
<dbReference type="PANTHER" id="PTHR12532">
    <property type="entry name" value="TRANSLATIONAL ACTIVATOR OF CYTOCHROME C OXIDASE 1"/>
    <property type="match status" value="1"/>
</dbReference>
<dbReference type="Pfam" id="PF20772">
    <property type="entry name" value="TACO1_YebC_N"/>
    <property type="match status" value="1"/>
</dbReference>
<dbReference type="Pfam" id="PF01709">
    <property type="entry name" value="Transcrip_reg"/>
    <property type="match status" value="1"/>
</dbReference>
<dbReference type="SUPFAM" id="SSF75625">
    <property type="entry name" value="YebC-like"/>
    <property type="match status" value="1"/>
</dbReference>
<organism>
    <name type="scientific">Bifidobacterium longum subsp. infantis (strain ATCC 15697 / DSM 20088 / JCM 1222 / NCTC 11817 / S12)</name>
    <dbReference type="NCBI Taxonomy" id="391904"/>
    <lineage>
        <taxon>Bacteria</taxon>
        <taxon>Bacillati</taxon>
        <taxon>Actinomycetota</taxon>
        <taxon>Actinomycetes</taxon>
        <taxon>Bifidobacteriales</taxon>
        <taxon>Bifidobacteriaceae</taxon>
        <taxon>Bifidobacterium</taxon>
    </lineage>
</organism>
<proteinExistence type="inferred from homology"/>
<accession>B7GR15</accession>
<accession>E8MJP3</accession>
<reference key="1">
    <citation type="journal article" date="2008" name="Proc. Natl. Acad. Sci. U.S.A.">
        <title>The genome sequence of Bifidobacterium longum subsp. infantis reveals adaptations for milk utilization within the infant microbiome.</title>
        <authorList>
            <person name="Sela D.A."/>
            <person name="Chapman J."/>
            <person name="Adeuya A."/>
            <person name="Kim J.H."/>
            <person name="Chen F."/>
            <person name="Whitehead T.R."/>
            <person name="Lapidus A."/>
            <person name="Rokhsar D.S."/>
            <person name="Lebrilla C.B."/>
            <person name="German J.B."/>
            <person name="Price N.P."/>
            <person name="Richardson P.M."/>
            <person name="Mills D.A."/>
        </authorList>
    </citation>
    <scope>NUCLEOTIDE SEQUENCE [LARGE SCALE GENOMIC DNA]</scope>
    <source>
        <strain>ATCC 15697 / DSM 20088 / JCM 1222 / NCTC 11817 / S12</strain>
    </source>
</reference>
<reference key="2">
    <citation type="journal article" date="2011" name="Nature">
        <title>Bifidobacteria can protect from enteropathogenic infection through production of acetate.</title>
        <authorList>
            <person name="Fukuda S."/>
            <person name="Toh H."/>
            <person name="Hase K."/>
            <person name="Oshima K."/>
            <person name="Nakanishi Y."/>
            <person name="Yoshimura K."/>
            <person name="Tobe T."/>
            <person name="Clarke J.M."/>
            <person name="Topping D.L."/>
            <person name="Suzuki T."/>
            <person name="Taylor T.D."/>
            <person name="Itoh K."/>
            <person name="Kikuchi J."/>
            <person name="Morita H."/>
            <person name="Hattori M."/>
            <person name="Ohno H."/>
        </authorList>
    </citation>
    <scope>NUCLEOTIDE SEQUENCE [LARGE SCALE GENOMIC DNA]</scope>
    <source>
        <strain>ATCC 15697 / DSM 20088 / JCM 1222 / NCTC 11817 / S12</strain>
    </source>
</reference>